<keyword id="KW-0012">Acyltransferase</keyword>
<keyword id="KW-0319">Glycerol metabolism</keyword>
<keyword id="KW-0444">Lipid biosynthesis</keyword>
<keyword id="KW-0443">Lipid metabolism</keyword>
<keyword id="KW-1185">Reference proteome</keyword>
<keyword id="KW-0808">Transferase</keyword>
<reference key="1">
    <citation type="journal article" date="1998" name="Nature">
        <title>Deciphering the biology of Mycobacterium tuberculosis from the complete genome sequence.</title>
        <authorList>
            <person name="Cole S.T."/>
            <person name="Brosch R."/>
            <person name="Parkhill J."/>
            <person name="Garnier T."/>
            <person name="Churcher C.M."/>
            <person name="Harris D.E."/>
            <person name="Gordon S.V."/>
            <person name="Eiglmeier K."/>
            <person name="Gas S."/>
            <person name="Barry C.E. III"/>
            <person name="Tekaia F."/>
            <person name="Badcock K."/>
            <person name="Basham D."/>
            <person name="Brown D."/>
            <person name="Chillingworth T."/>
            <person name="Connor R."/>
            <person name="Davies R.M."/>
            <person name="Devlin K."/>
            <person name="Feltwell T."/>
            <person name="Gentles S."/>
            <person name="Hamlin N."/>
            <person name="Holroyd S."/>
            <person name="Hornsby T."/>
            <person name="Jagels K."/>
            <person name="Krogh A."/>
            <person name="McLean J."/>
            <person name="Moule S."/>
            <person name="Murphy L.D."/>
            <person name="Oliver S."/>
            <person name="Osborne J."/>
            <person name="Quail M.A."/>
            <person name="Rajandream M.A."/>
            <person name="Rogers J."/>
            <person name="Rutter S."/>
            <person name="Seeger K."/>
            <person name="Skelton S."/>
            <person name="Squares S."/>
            <person name="Squares R."/>
            <person name="Sulston J.E."/>
            <person name="Taylor K."/>
            <person name="Whitehead S."/>
            <person name="Barrell B.G."/>
        </authorList>
    </citation>
    <scope>NUCLEOTIDE SEQUENCE [LARGE SCALE GENOMIC DNA]</scope>
    <source>
        <strain>ATCC 25618 / H37Rv</strain>
    </source>
</reference>
<reference key="2">
    <citation type="journal article" date="2004" name="J. Bacteriol.">
        <title>Induction of a novel class of diacylglycerol acyltransferases and triacylglycerol accumulation in Mycobacterium tuberculosis as it goes into a dormancy-like state in culture.</title>
        <authorList>
            <person name="Daniel J."/>
            <person name="Deb C."/>
            <person name="Dubey V.S."/>
            <person name="Sirakova T.D."/>
            <person name="Abomoelak B."/>
            <person name="Morbidoni H.R."/>
            <person name="Kolattukudy P.E."/>
        </authorList>
    </citation>
    <scope>EXPRESSION IN E.COLI</scope>
    <scope>CATALYTIC ACTIVITY</scope>
    <scope>INDUCTION BY HYPOXIA</scope>
    <scope>BY NITRIC OXIDE (NO)</scope>
    <source>
        <strain>ATCC 25618 / H37Rv</strain>
    </source>
</reference>
<reference key="3">
    <citation type="journal article" date="2011" name="Mol. Cell. Proteomics">
        <title>Proteogenomic analysis of Mycobacterium tuberculosis by high resolution mass spectrometry.</title>
        <authorList>
            <person name="Kelkar D.S."/>
            <person name="Kumar D."/>
            <person name="Kumar P."/>
            <person name="Balakrishnan L."/>
            <person name="Muthusamy B."/>
            <person name="Yadav A.K."/>
            <person name="Shrivastava P."/>
            <person name="Marimuthu A."/>
            <person name="Anand S."/>
            <person name="Sundaram H."/>
            <person name="Kingsbury R."/>
            <person name="Harsha H.C."/>
            <person name="Nair B."/>
            <person name="Prasad T.S."/>
            <person name="Chauhan D.S."/>
            <person name="Katoch K."/>
            <person name="Katoch V.M."/>
            <person name="Kumar P."/>
            <person name="Chaerkady R."/>
            <person name="Ramachandran S."/>
            <person name="Dash D."/>
            <person name="Pandey A."/>
        </authorList>
    </citation>
    <scope>IDENTIFICATION BY MASS SPECTROMETRY [LARGE SCALE ANALYSIS]</scope>
    <source>
        <strain>ATCC 25618 / H37Rv</strain>
    </source>
</reference>
<accession>P9WKB5</accession>
<accession>L0TBU7</accession>
<accession>P67206</accession>
<accession>Q50680</accession>
<comment type="function">
    <text evidence="1">Catalyzes the terminal and only committed step in triacylglycerol synthesis by using diacylglycerol and fatty acyl CoA as substrates. Required for storage lipid synthesis.</text>
</comment>
<comment type="function">
    <text evidence="3">Upon expression in E.coli functions weakly as a triacylglycerol synthase, making triacylglycerol (TG) from diolein and long-chain fatty acyl-CoA. Has very weak wax synthase activity, incorporating palmityl alcohol into wax esters in the presence of palmitoyl-CoA.</text>
</comment>
<comment type="catalytic activity">
    <reaction evidence="3">
        <text>an acyl-CoA + a 1,2-diacyl-sn-glycerol = a triacyl-sn-glycerol + CoA</text>
        <dbReference type="Rhea" id="RHEA:10868"/>
        <dbReference type="ChEBI" id="CHEBI:17815"/>
        <dbReference type="ChEBI" id="CHEBI:57287"/>
        <dbReference type="ChEBI" id="CHEBI:58342"/>
        <dbReference type="ChEBI" id="CHEBI:64615"/>
        <dbReference type="EC" id="2.3.1.20"/>
    </reaction>
</comment>
<comment type="catalytic activity">
    <reaction evidence="3">
        <text>di-(9Z)-octadecenoylglycerol + (9Z)-octadecenoyl-CoA = 1,2,3-tri-(9Z-octadecenoyl)-glycerol + CoA</text>
        <dbReference type="Rhea" id="RHEA:45780"/>
        <dbReference type="ChEBI" id="CHEBI:53753"/>
        <dbReference type="ChEBI" id="CHEBI:57287"/>
        <dbReference type="ChEBI" id="CHEBI:57387"/>
        <dbReference type="ChEBI" id="CHEBI:75945"/>
    </reaction>
    <physiologicalReaction direction="left-to-right" evidence="3">
        <dbReference type="Rhea" id="RHEA:45781"/>
    </physiologicalReaction>
</comment>
<comment type="pathway">
    <text>Glycerolipid metabolism; triacylglycerol biosynthesis.</text>
</comment>
<comment type="induction">
    <text evidence="3">A possible member of the dormancy regulon. Induced in response to reduced oxygen tension (hypoxia) and low levels of nitric oxide (NO). It is hoped that this regulon will give insight into the latent, or dormant phase of infection.</text>
</comment>
<comment type="similarity">
    <text evidence="4">Belongs to the long-chain O-acyltransferase family.</text>
</comment>
<organism>
    <name type="scientific">Mycobacterium tuberculosis (strain ATCC 25618 / H37Rv)</name>
    <dbReference type="NCBI Taxonomy" id="83332"/>
    <lineage>
        <taxon>Bacteria</taxon>
        <taxon>Bacillati</taxon>
        <taxon>Actinomycetota</taxon>
        <taxon>Actinomycetes</taxon>
        <taxon>Mycobacteriales</taxon>
        <taxon>Mycobacteriaceae</taxon>
        <taxon>Mycobacterium</taxon>
        <taxon>Mycobacterium tuberculosis complex</taxon>
    </lineage>
</organism>
<sequence length="445" mass="47707">MKLLSPLDQMFARMEAPRTPMHIGAFAVFDLPKGAPRRFIRDLYEAISQLAFLPFPFDSVIAGGASMAYWRQVQPDPSYHVRLSALPYPGTGRDLGALVERLHSTPLDMAKPLWELHLIEGLTGRQFAMYFKAHHCAVDGLGGVNLIKSWLTTDPEAPPGSGKPEPFGDDYDLASVLAAATTKRAVEGVSAVSELAGRLSSMVLGANSSVRAALTTPRTPFNTRVNRHRRLAVQVLKLPRLKAVAHATDCTVNDVILASVGGACRRYLQELGDLPTNTLTASVPVGFERDADTVNAASGFVAPLGTSIEDPVARLTTISASTTRGKAELLAMSPNALQHYSVFGLLPIAVGQKTGALGVIPPLFNFTVSNVVLSKDPLYLSGAKLDVIVPMSFLCDGYGLNVTLVGYTDKVVLGFLGCRDTLPHLQRLAQYTGAAFEELETAALP</sequence>
<proteinExistence type="evidence at protein level"/>
<protein>
    <recommendedName>
        <fullName>Putative diacyglycerol O-acyltransferase Rv2285</fullName>
        <ecNumber evidence="3">2.3.1.20</ecNumber>
    </recommendedName>
    <alternativeName>
        <fullName>Putative triacylglycerol synthase Rv2285</fullName>
    </alternativeName>
</protein>
<dbReference type="EC" id="2.3.1.20" evidence="3"/>
<dbReference type="EMBL" id="AL123456">
    <property type="protein sequence ID" value="CCP45067.1"/>
    <property type="molecule type" value="Genomic_DNA"/>
</dbReference>
<dbReference type="PIR" id="A70732">
    <property type="entry name" value="A70732"/>
</dbReference>
<dbReference type="RefSeq" id="NP_216801.1">
    <property type="nucleotide sequence ID" value="NC_000962.3"/>
</dbReference>
<dbReference type="RefSeq" id="WP_003411704.1">
    <property type="nucleotide sequence ID" value="NZ_NVQJ01000012.1"/>
</dbReference>
<dbReference type="SMR" id="P9WKB5"/>
<dbReference type="STRING" id="83332.Rv2285"/>
<dbReference type="SwissLipids" id="SLP:000001151"/>
<dbReference type="PaxDb" id="83332-Rv2285"/>
<dbReference type="GeneID" id="888632"/>
<dbReference type="KEGG" id="mtu:Rv2285"/>
<dbReference type="KEGG" id="mtv:RVBD_2285"/>
<dbReference type="TubercuList" id="Rv2285"/>
<dbReference type="eggNOG" id="COG1020">
    <property type="taxonomic scope" value="Bacteria"/>
</dbReference>
<dbReference type="InParanoid" id="P9WKB5"/>
<dbReference type="OrthoDB" id="9810950at2"/>
<dbReference type="PhylomeDB" id="P9WKB5"/>
<dbReference type="UniPathway" id="UPA00282"/>
<dbReference type="Proteomes" id="UP000001584">
    <property type="component" value="Chromosome"/>
</dbReference>
<dbReference type="GO" id="GO:0005886">
    <property type="term" value="C:plasma membrane"/>
    <property type="evidence" value="ECO:0000318"/>
    <property type="project" value="GO_Central"/>
</dbReference>
<dbReference type="GO" id="GO:0004144">
    <property type="term" value="F:diacylglycerol O-acyltransferase activity"/>
    <property type="evidence" value="ECO:0000314"/>
    <property type="project" value="MTBBASE"/>
</dbReference>
<dbReference type="GO" id="GO:0008374">
    <property type="term" value="F:O-acyltransferase activity"/>
    <property type="evidence" value="ECO:0000318"/>
    <property type="project" value="GO_Central"/>
</dbReference>
<dbReference type="GO" id="GO:0051701">
    <property type="term" value="P:biological process involved in interaction with host"/>
    <property type="evidence" value="ECO:0000318"/>
    <property type="project" value="GO_Central"/>
</dbReference>
<dbReference type="GO" id="GO:0006071">
    <property type="term" value="P:glycerol metabolic process"/>
    <property type="evidence" value="ECO:0007669"/>
    <property type="project" value="UniProtKB-KW"/>
</dbReference>
<dbReference type="GO" id="GO:0045017">
    <property type="term" value="P:glycerolipid biosynthetic process"/>
    <property type="evidence" value="ECO:0000314"/>
    <property type="project" value="MTBBASE"/>
</dbReference>
<dbReference type="GO" id="GO:0001666">
    <property type="term" value="P:response to hypoxia"/>
    <property type="evidence" value="ECO:0000318"/>
    <property type="project" value="GO_Central"/>
</dbReference>
<dbReference type="GO" id="GO:0071731">
    <property type="term" value="P:response to nitric oxide"/>
    <property type="evidence" value="ECO:0000318"/>
    <property type="project" value="GO_Central"/>
</dbReference>
<dbReference type="GO" id="GO:0019432">
    <property type="term" value="P:triglyceride biosynthetic process"/>
    <property type="evidence" value="ECO:0000318"/>
    <property type="project" value="GO_Central"/>
</dbReference>
<dbReference type="InterPro" id="IPR014292">
    <property type="entry name" value="Acyl_transf_WS/DGAT"/>
</dbReference>
<dbReference type="InterPro" id="IPR045034">
    <property type="entry name" value="O-acyltransferase_WSD1-like"/>
</dbReference>
<dbReference type="InterPro" id="IPR009721">
    <property type="entry name" value="O-acyltransferase_WSD1_C"/>
</dbReference>
<dbReference type="InterPro" id="IPR004255">
    <property type="entry name" value="O-acyltransferase_WSD1_N"/>
</dbReference>
<dbReference type="NCBIfam" id="TIGR02946">
    <property type="entry name" value="acyl_WS_DGAT"/>
    <property type="match status" value="1"/>
</dbReference>
<dbReference type="PANTHER" id="PTHR31650">
    <property type="entry name" value="O-ACYLTRANSFERASE (WSD1-LIKE) FAMILY PROTEIN"/>
    <property type="match status" value="1"/>
</dbReference>
<dbReference type="PANTHER" id="PTHR31650:SF1">
    <property type="entry name" value="WAX ESTER SYNTHASE_DIACYLGLYCEROL ACYLTRANSFERASE 4-RELATED"/>
    <property type="match status" value="1"/>
</dbReference>
<dbReference type="Pfam" id="PF06974">
    <property type="entry name" value="WS_DGAT_C"/>
    <property type="match status" value="1"/>
</dbReference>
<dbReference type="Pfam" id="PF03007">
    <property type="entry name" value="WS_DGAT_cat"/>
    <property type="match status" value="1"/>
</dbReference>
<dbReference type="SUPFAM" id="SSF52777">
    <property type="entry name" value="CoA-dependent acyltransferases"/>
    <property type="match status" value="1"/>
</dbReference>
<name>Y2285_MYCTU</name>
<gene>
    <name type="ordered locus">Rv2285</name>
    <name type="ORF">MTCY339.25c</name>
</gene>
<feature type="chain" id="PRO_0000222910" description="Putative diacyglycerol O-acyltransferase Rv2285">
    <location>
        <begin position="1"/>
        <end position="445"/>
    </location>
</feature>
<feature type="active site" description="Proton acceptor" evidence="2">
    <location>
        <position position="135"/>
    </location>
</feature>
<evidence type="ECO:0000250" key="1">
    <source>
        <dbReference type="UniProtKB" id="P9WKC9"/>
    </source>
</evidence>
<evidence type="ECO:0000255" key="2"/>
<evidence type="ECO:0000269" key="3">
    <source>
    </source>
</evidence>
<evidence type="ECO:0000305" key="4"/>